<gene>
    <name evidence="1" type="primary">gatB</name>
    <name type="ordered locus">NGR_c11000</name>
</gene>
<protein>
    <recommendedName>
        <fullName evidence="1">Aspartyl/glutamyl-tRNA(Asn/Gln) amidotransferase subunit B</fullName>
        <shortName evidence="1">Asp/Glu-ADT subunit B</shortName>
        <ecNumber evidence="1">6.3.5.-</ecNumber>
    </recommendedName>
</protein>
<sequence length="500" mass="54682">MSIVDVRTPDPKRFIPGATGDWEVIIGLEVHAQVLSNSKLFSGASTEFGNAPNANVSLVDAAMPGMLPVINEECVKQAVRTGLGLKAKINRRSIFDRKNYFYPDLPQGYQISQYKDPIVGEGKIIISIGPDRQGQFEDVEIGIERLHLEQDAGKSMHDQHPSMSYVDLNRSGVALMEIVSKPDLRSSDEAKAYLTKLRSILRYLGTCDGNMDEGSMRADVNVSVRRPGAAFGTRCEIKNVNSIRFVGQAIEYEARRQIGILEDGGTIDQETRLFDPNKGETRSMRSKEDAHDYRYFPDPDLLPLEFDDAFVEALKTDLPELPDDKKDRFVRDLGLSVYDASVLVSEKAIADYFEAVAEGRDGKIAANWVINDLLGALNKAGKTIEETPVSPAQLGGVIDLIKAGTISGKLAKDLFEILWNEGGDPAEIVESRGMKQVTDTGAIEKAVDEIIAANPDQVEKAKAKPSLAGWFVGQVMKATGGKANPQAVQALVKSKLGIEE</sequence>
<evidence type="ECO:0000255" key="1">
    <source>
        <dbReference type="HAMAP-Rule" id="MF_00121"/>
    </source>
</evidence>
<accession>C3MAA7</accession>
<proteinExistence type="inferred from homology"/>
<dbReference type="EC" id="6.3.5.-" evidence="1"/>
<dbReference type="EMBL" id="CP001389">
    <property type="protein sequence ID" value="ACP24886.1"/>
    <property type="molecule type" value="Genomic_DNA"/>
</dbReference>
<dbReference type="RefSeq" id="WP_012707669.1">
    <property type="nucleotide sequence ID" value="NC_012587.1"/>
</dbReference>
<dbReference type="RefSeq" id="YP_002825639.1">
    <property type="nucleotide sequence ID" value="NC_012587.1"/>
</dbReference>
<dbReference type="SMR" id="C3MAA7"/>
<dbReference type="STRING" id="394.NGR_c11000"/>
<dbReference type="KEGG" id="rhi:NGR_c11000"/>
<dbReference type="PATRIC" id="fig|394.7.peg.3927"/>
<dbReference type="eggNOG" id="COG0064">
    <property type="taxonomic scope" value="Bacteria"/>
</dbReference>
<dbReference type="HOGENOM" id="CLU_019240_0_0_5"/>
<dbReference type="OrthoDB" id="9804078at2"/>
<dbReference type="Proteomes" id="UP000001054">
    <property type="component" value="Chromosome"/>
</dbReference>
<dbReference type="GO" id="GO:0050566">
    <property type="term" value="F:asparaginyl-tRNA synthase (glutamine-hydrolyzing) activity"/>
    <property type="evidence" value="ECO:0007669"/>
    <property type="project" value="RHEA"/>
</dbReference>
<dbReference type="GO" id="GO:0005524">
    <property type="term" value="F:ATP binding"/>
    <property type="evidence" value="ECO:0007669"/>
    <property type="project" value="UniProtKB-KW"/>
</dbReference>
<dbReference type="GO" id="GO:0050567">
    <property type="term" value="F:glutaminyl-tRNA synthase (glutamine-hydrolyzing) activity"/>
    <property type="evidence" value="ECO:0007669"/>
    <property type="project" value="UniProtKB-UniRule"/>
</dbReference>
<dbReference type="GO" id="GO:0070681">
    <property type="term" value="P:glutaminyl-tRNAGln biosynthesis via transamidation"/>
    <property type="evidence" value="ECO:0007669"/>
    <property type="project" value="TreeGrafter"/>
</dbReference>
<dbReference type="GO" id="GO:0006412">
    <property type="term" value="P:translation"/>
    <property type="evidence" value="ECO:0007669"/>
    <property type="project" value="UniProtKB-UniRule"/>
</dbReference>
<dbReference type="FunFam" id="1.10.10.410:FF:000001">
    <property type="entry name" value="Aspartyl/glutamyl-tRNA(Asn/Gln) amidotransferase subunit B"/>
    <property type="match status" value="1"/>
</dbReference>
<dbReference type="FunFam" id="1.10.150.380:FF:000001">
    <property type="entry name" value="Aspartyl/glutamyl-tRNA(Asn/Gln) amidotransferase subunit B"/>
    <property type="match status" value="1"/>
</dbReference>
<dbReference type="Gene3D" id="1.10.10.410">
    <property type="match status" value="1"/>
</dbReference>
<dbReference type="Gene3D" id="1.10.150.380">
    <property type="entry name" value="GatB domain, N-terminal subdomain"/>
    <property type="match status" value="1"/>
</dbReference>
<dbReference type="HAMAP" id="MF_00121">
    <property type="entry name" value="GatB"/>
    <property type="match status" value="1"/>
</dbReference>
<dbReference type="InterPro" id="IPR017959">
    <property type="entry name" value="Asn/Gln-tRNA_amidoTrfase_suB/E"/>
</dbReference>
<dbReference type="InterPro" id="IPR006075">
    <property type="entry name" value="Asn/Gln-tRNA_Trfase_suB/E_cat"/>
</dbReference>
<dbReference type="InterPro" id="IPR018027">
    <property type="entry name" value="Asn/Gln_amidotransferase"/>
</dbReference>
<dbReference type="InterPro" id="IPR003789">
    <property type="entry name" value="Asn/Gln_tRNA_amidoTrase-B-like"/>
</dbReference>
<dbReference type="InterPro" id="IPR004413">
    <property type="entry name" value="GatB"/>
</dbReference>
<dbReference type="InterPro" id="IPR042114">
    <property type="entry name" value="GatB_C_1"/>
</dbReference>
<dbReference type="InterPro" id="IPR023168">
    <property type="entry name" value="GatB_Yqey_C_2"/>
</dbReference>
<dbReference type="InterPro" id="IPR017958">
    <property type="entry name" value="Gln-tRNA_amidoTrfase_suB_CS"/>
</dbReference>
<dbReference type="InterPro" id="IPR014746">
    <property type="entry name" value="Gln_synth/guanido_kin_cat_dom"/>
</dbReference>
<dbReference type="NCBIfam" id="TIGR00133">
    <property type="entry name" value="gatB"/>
    <property type="match status" value="1"/>
</dbReference>
<dbReference type="NCBIfam" id="NF004012">
    <property type="entry name" value="PRK05477.1-2"/>
    <property type="match status" value="1"/>
</dbReference>
<dbReference type="NCBIfam" id="NF004014">
    <property type="entry name" value="PRK05477.1-4"/>
    <property type="match status" value="1"/>
</dbReference>
<dbReference type="NCBIfam" id="NF004015">
    <property type="entry name" value="PRK05477.1-5"/>
    <property type="match status" value="1"/>
</dbReference>
<dbReference type="PANTHER" id="PTHR11659">
    <property type="entry name" value="GLUTAMYL-TRNA GLN AMIDOTRANSFERASE SUBUNIT B MITOCHONDRIAL AND PROKARYOTIC PET112-RELATED"/>
    <property type="match status" value="1"/>
</dbReference>
<dbReference type="PANTHER" id="PTHR11659:SF0">
    <property type="entry name" value="GLUTAMYL-TRNA(GLN) AMIDOTRANSFERASE SUBUNIT B, MITOCHONDRIAL"/>
    <property type="match status" value="1"/>
</dbReference>
<dbReference type="Pfam" id="PF02934">
    <property type="entry name" value="GatB_N"/>
    <property type="match status" value="1"/>
</dbReference>
<dbReference type="Pfam" id="PF02637">
    <property type="entry name" value="GatB_Yqey"/>
    <property type="match status" value="1"/>
</dbReference>
<dbReference type="SMART" id="SM00845">
    <property type="entry name" value="GatB_Yqey"/>
    <property type="match status" value="1"/>
</dbReference>
<dbReference type="SUPFAM" id="SSF89095">
    <property type="entry name" value="GatB/YqeY motif"/>
    <property type="match status" value="1"/>
</dbReference>
<dbReference type="SUPFAM" id="SSF55931">
    <property type="entry name" value="Glutamine synthetase/guanido kinase"/>
    <property type="match status" value="1"/>
</dbReference>
<dbReference type="PROSITE" id="PS01234">
    <property type="entry name" value="GATB"/>
    <property type="match status" value="1"/>
</dbReference>
<reference key="1">
    <citation type="journal article" date="2009" name="Appl. Environ. Microbiol.">
        <title>Rhizobium sp. strain NGR234 possesses a remarkable number of secretion systems.</title>
        <authorList>
            <person name="Schmeisser C."/>
            <person name="Liesegang H."/>
            <person name="Krysciak D."/>
            <person name="Bakkou N."/>
            <person name="Le Quere A."/>
            <person name="Wollherr A."/>
            <person name="Heinemeyer I."/>
            <person name="Morgenstern B."/>
            <person name="Pommerening-Roeser A."/>
            <person name="Flores M."/>
            <person name="Palacios R."/>
            <person name="Brenner S."/>
            <person name="Gottschalk G."/>
            <person name="Schmitz R.A."/>
            <person name="Broughton W.J."/>
            <person name="Perret X."/>
            <person name="Strittmatter A.W."/>
            <person name="Streit W.R."/>
        </authorList>
    </citation>
    <scope>NUCLEOTIDE SEQUENCE [LARGE SCALE GENOMIC DNA]</scope>
    <source>
        <strain>NBRC 101917 / NGR234</strain>
    </source>
</reference>
<organism>
    <name type="scientific">Sinorhizobium fredii (strain NBRC 101917 / NGR234)</name>
    <dbReference type="NCBI Taxonomy" id="394"/>
    <lineage>
        <taxon>Bacteria</taxon>
        <taxon>Pseudomonadati</taxon>
        <taxon>Pseudomonadota</taxon>
        <taxon>Alphaproteobacteria</taxon>
        <taxon>Hyphomicrobiales</taxon>
        <taxon>Rhizobiaceae</taxon>
        <taxon>Sinorhizobium/Ensifer group</taxon>
        <taxon>Sinorhizobium</taxon>
    </lineage>
</organism>
<name>GATB_SINFN</name>
<comment type="function">
    <text evidence="1">Allows the formation of correctly charged Asn-tRNA(Asn) or Gln-tRNA(Gln) through the transamidation of misacylated Asp-tRNA(Asn) or Glu-tRNA(Gln) in organisms which lack either or both of asparaginyl-tRNA or glutaminyl-tRNA synthetases. The reaction takes place in the presence of glutamine and ATP through an activated phospho-Asp-tRNA(Asn) or phospho-Glu-tRNA(Gln).</text>
</comment>
<comment type="catalytic activity">
    <reaction evidence="1">
        <text>L-glutamyl-tRNA(Gln) + L-glutamine + ATP + H2O = L-glutaminyl-tRNA(Gln) + L-glutamate + ADP + phosphate + H(+)</text>
        <dbReference type="Rhea" id="RHEA:17521"/>
        <dbReference type="Rhea" id="RHEA-COMP:9681"/>
        <dbReference type="Rhea" id="RHEA-COMP:9684"/>
        <dbReference type="ChEBI" id="CHEBI:15377"/>
        <dbReference type="ChEBI" id="CHEBI:15378"/>
        <dbReference type="ChEBI" id="CHEBI:29985"/>
        <dbReference type="ChEBI" id="CHEBI:30616"/>
        <dbReference type="ChEBI" id="CHEBI:43474"/>
        <dbReference type="ChEBI" id="CHEBI:58359"/>
        <dbReference type="ChEBI" id="CHEBI:78520"/>
        <dbReference type="ChEBI" id="CHEBI:78521"/>
        <dbReference type="ChEBI" id="CHEBI:456216"/>
    </reaction>
</comment>
<comment type="catalytic activity">
    <reaction evidence="1">
        <text>L-aspartyl-tRNA(Asn) + L-glutamine + ATP + H2O = L-asparaginyl-tRNA(Asn) + L-glutamate + ADP + phosphate + 2 H(+)</text>
        <dbReference type="Rhea" id="RHEA:14513"/>
        <dbReference type="Rhea" id="RHEA-COMP:9674"/>
        <dbReference type="Rhea" id="RHEA-COMP:9677"/>
        <dbReference type="ChEBI" id="CHEBI:15377"/>
        <dbReference type="ChEBI" id="CHEBI:15378"/>
        <dbReference type="ChEBI" id="CHEBI:29985"/>
        <dbReference type="ChEBI" id="CHEBI:30616"/>
        <dbReference type="ChEBI" id="CHEBI:43474"/>
        <dbReference type="ChEBI" id="CHEBI:58359"/>
        <dbReference type="ChEBI" id="CHEBI:78515"/>
        <dbReference type="ChEBI" id="CHEBI:78516"/>
        <dbReference type="ChEBI" id="CHEBI:456216"/>
    </reaction>
</comment>
<comment type="subunit">
    <text evidence="1">Heterotrimer of A, B and C subunits.</text>
</comment>
<comment type="similarity">
    <text evidence="1">Belongs to the GatB/GatE family. GatB subfamily.</text>
</comment>
<keyword id="KW-0067">ATP-binding</keyword>
<keyword id="KW-0436">Ligase</keyword>
<keyword id="KW-0547">Nucleotide-binding</keyword>
<keyword id="KW-0648">Protein biosynthesis</keyword>
<keyword id="KW-1185">Reference proteome</keyword>
<feature type="chain" id="PRO_1000122531" description="Aspartyl/glutamyl-tRNA(Asn/Gln) amidotransferase subunit B">
    <location>
        <begin position="1"/>
        <end position="500"/>
    </location>
</feature>